<name>IF3_AZOVI</name>
<comment type="function">
    <text evidence="1">IF-3 binds to the 30S ribosomal subunit and shifts the equilibrium between 70S ribosomes and their 50S and 30S subunits in favor of the free subunits, thus enhancing the availability of 30S subunits on which protein synthesis initiation begins.</text>
</comment>
<comment type="subunit">
    <text evidence="1">Monomer.</text>
</comment>
<comment type="subcellular location">
    <subcellularLocation>
        <location evidence="1">Cytoplasm</location>
    </subcellularLocation>
</comment>
<comment type="similarity">
    <text evidence="1">Belongs to the IF-3 family.</text>
</comment>
<proteinExistence type="inferred from homology"/>
<sequence length="181" mass="20781">MKREMRQDRKAQPKAPINENISAREVRLIGVDGEQIGIVSIDEALRVAEEAKLDLVEISADAVPPVCRIMDYGKHLFEKKKQVAAAKKNQKQVQIKEIKFRPGTEEGDYQVKLRNLVRFLNDGDKAKVSLRFRGREMAHQELGMELLKRVENDLAEFGTVEQYPKLEGRQLMMVIAPKKRK</sequence>
<feature type="chain" id="PRO_0000177474" description="Translation initiation factor IF-3">
    <location>
        <begin position="1"/>
        <end position="181"/>
    </location>
</feature>
<gene>
    <name evidence="1" type="primary">infC</name>
</gene>
<evidence type="ECO:0000255" key="1">
    <source>
        <dbReference type="HAMAP-Rule" id="MF_00080"/>
    </source>
</evidence>
<accession>Q8RQ01</accession>
<reference key="1">
    <citation type="submission" date="2000-12" db="EMBL/GenBank/DDBJ databases">
        <title>Control of PheST in Azotobacter vinelandii.</title>
        <authorList>
            <person name="Tindale A.E."/>
            <person name="Mehrotra M."/>
            <person name="Macyk A.S."/>
            <person name="Kujat-Choy S."/>
            <person name="Page W.J."/>
        </authorList>
    </citation>
    <scope>NUCLEOTIDE SEQUENCE [GENOMIC DNA]</scope>
    <source>
        <strain>UA22</strain>
    </source>
</reference>
<organism>
    <name type="scientific">Azotobacter vinelandii</name>
    <dbReference type="NCBI Taxonomy" id="354"/>
    <lineage>
        <taxon>Bacteria</taxon>
        <taxon>Pseudomonadati</taxon>
        <taxon>Pseudomonadota</taxon>
        <taxon>Gammaproteobacteria</taxon>
        <taxon>Pseudomonadales</taxon>
        <taxon>Pseudomonadaceae</taxon>
        <taxon>Azotobacter</taxon>
    </lineage>
</organism>
<keyword id="KW-0963">Cytoplasm</keyword>
<keyword id="KW-0396">Initiation factor</keyword>
<keyword id="KW-0648">Protein biosynthesis</keyword>
<dbReference type="EMBL" id="AF332624">
    <property type="protein sequence ID" value="AAL87031.1"/>
    <property type="molecule type" value="Genomic_DNA"/>
</dbReference>
<dbReference type="SMR" id="Q8RQ01"/>
<dbReference type="GO" id="GO:0005829">
    <property type="term" value="C:cytosol"/>
    <property type="evidence" value="ECO:0007669"/>
    <property type="project" value="TreeGrafter"/>
</dbReference>
<dbReference type="GO" id="GO:0016020">
    <property type="term" value="C:membrane"/>
    <property type="evidence" value="ECO:0007669"/>
    <property type="project" value="TreeGrafter"/>
</dbReference>
<dbReference type="GO" id="GO:0043022">
    <property type="term" value="F:ribosome binding"/>
    <property type="evidence" value="ECO:0007669"/>
    <property type="project" value="TreeGrafter"/>
</dbReference>
<dbReference type="GO" id="GO:0003743">
    <property type="term" value="F:translation initiation factor activity"/>
    <property type="evidence" value="ECO:0007669"/>
    <property type="project" value="UniProtKB-UniRule"/>
</dbReference>
<dbReference type="GO" id="GO:0032790">
    <property type="term" value="P:ribosome disassembly"/>
    <property type="evidence" value="ECO:0007669"/>
    <property type="project" value="TreeGrafter"/>
</dbReference>
<dbReference type="FunFam" id="3.10.20.80:FF:000001">
    <property type="entry name" value="Translation initiation factor IF-3"/>
    <property type="match status" value="1"/>
</dbReference>
<dbReference type="FunFam" id="3.30.110.10:FF:000001">
    <property type="entry name" value="Translation initiation factor IF-3"/>
    <property type="match status" value="1"/>
</dbReference>
<dbReference type="Gene3D" id="3.30.110.10">
    <property type="entry name" value="Translation initiation factor 3 (IF-3), C-terminal domain"/>
    <property type="match status" value="1"/>
</dbReference>
<dbReference type="Gene3D" id="3.10.20.80">
    <property type="entry name" value="Translation initiation factor 3 (IF-3), N-terminal domain"/>
    <property type="match status" value="1"/>
</dbReference>
<dbReference type="HAMAP" id="MF_00080">
    <property type="entry name" value="IF_3"/>
    <property type="match status" value="1"/>
</dbReference>
<dbReference type="InterPro" id="IPR036788">
    <property type="entry name" value="T_IF-3_C_sf"/>
</dbReference>
<dbReference type="InterPro" id="IPR036787">
    <property type="entry name" value="T_IF-3_N_sf"/>
</dbReference>
<dbReference type="InterPro" id="IPR001288">
    <property type="entry name" value="Translation_initiation_fac_3"/>
</dbReference>
<dbReference type="InterPro" id="IPR019815">
    <property type="entry name" value="Translation_initiation_fac_3_C"/>
</dbReference>
<dbReference type="InterPro" id="IPR019814">
    <property type="entry name" value="Translation_initiation_fac_3_N"/>
</dbReference>
<dbReference type="NCBIfam" id="TIGR00168">
    <property type="entry name" value="infC"/>
    <property type="match status" value="1"/>
</dbReference>
<dbReference type="PANTHER" id="PTHR10938">
    <property type="entry name" value="TRANSLATION INITIATION FACTOR IF-3"/>
    <property type="match status" value="1"/>
</dbReference>
<dbReference type="PANTHER" id="PTHR10938:SF0">
    <property type="entry name" value="TRANSLATION INITIATION FACTOR IF-3, MITOCHONDRIAL"/>
    <property type="match status" value="1"/>
</dbReference>
<dbReference type="Pfam" id="PF00707">
    <property type="entry name" value="IF3_C"/>
    <property type="match status" value="1"/>
</dbReference>
<dbReference type="Pfam" id="PF05198">
    <property type="entry name" value="IF3_N"/>
    <property type="match status" value="1"/>
</dbReference>
<dbReference type="SUPFAM" id="SSF55200">
    <property type="entry name" value="Translation initiation factor IF3, C-terminal domain"/>
    <property type="match status" value="1"/>
</dbReference>
<dbReference type="SUPFAM" id="SSF54364">
    <property type="entry name" value="Translation initiation factor IF3, N-terminal domain"/>
    <property type="match status" value="1"/>
</dbReference>
<protein>
    <recommendedName>
        <fullName evidence="1">Translation initiation factor IF-3</fullName>
    </recommendedName>
</protein>